<keyword id="KW-0963">Cytoplasm</keyword>
<keyword id="KW-0274">FAD</keyword>
<keyword id="KW-0285">Flavoprotein</keyword>
<keyword id="KW-0560">Oxidoreductase</keyword>
<evidence type="ECO:0000255" key="1">
    <source>
        <dbReference type="HAMAP-Rule" id="MF_01052"/>
    </source>
</evidence>
<feature type="chain" id="PRO_1000064353" description="Crotonobetainyl-CoA reductase">
    <location>
        <begin position="1"/>
        <end position="380"/>
    </location>
</feature>
<gene>
    <name evidence="1" type="primary">caiA</name>
    <name type="ordered locus">SFV_0033</name>
</gene>
<dbReference type="EC" id="1.3.8.13" evidence="1"/>
<dbReference type="EMBL" id="CP000266">
    <property type="protein sequence ID" value="ABF02321.1"/>
    <property type="molecule type" value="Genomic_DNA"/>
</dbReference>
<dbReference type="RefSeq" id="WP_000347120.1">
    <property type="nucleotide sequence ID" value="NC_008258.1"/>
</dbReference>
<dbReference type="SMR" id="Q0T8F5"/>
<dbReference type="KEGG" id="sfv:SFV_0033"/>
<dbReference type="HOGENOM" id="CLU_018204_0_2_6"/>
<dbReference type="UniPathway" id="UPA00117"/>
<dbReference type="Proteomes" id="UP000000659">
    <property type="component" value="Chromosome"/>
</dbReference>
<dbReference type="GO" id="GO:0005737">
    <property type="term" value="C:cytoplasm"/>
    <property type="evidence" value="ECO:0007669"/>
    <property type="project" value="UniProtKB-SubCell"/>
</dbReference>
<dbReference type="GO" id="GO:0003995">
    <property type="term" value="F:acyl-CoA dehydrogenase activity"/>
    <property type="evidence" value="ECO:0007669"/>
    <property type="project" value="InterPro"/>
</dbReference>
<dbReference type="GO" id="GO:0050660">
    <property type="term" value="F:flavin adenine dinucleotide binding"/>
    <property type="evidence" value="ECO:0007669"/>
    <property type="project" value="InterPro"/>
</dbReference>
<dbReference type="GO" id="GO:0009437">
    <property type="term" value="P:carnitine metabolic process"/>
    <property type="evidence" value="ECO:0007669"/>
    <property type="project" value="UniProtKB-UniRule"/>
</dbReference>
<dbReference type="CDD" id="cd00567">
    <property type="entry name" value="ACAD"/>
    <property type="match status" value="1"/>
</dbReference>
<dbReference type="FunFam" id="1.20.140.10:FF:000001">
    <property type="entry name" value="Acyl-CoA dehydrogenase"/>
    <property type="match status" value="1"/>
</dbReference>
<dbReference type="FunFam" id="2.40.110.10:FF:000002">
    <property type="entry name" value="Acyl-CoA dehydrogenase fadE12"/>
    <property type="match status" value="1"/>
</dbReference>
<dbReference type="FunFam" id="1.10.540.10:FF:000005">
    <property type="entry name" value="Crotonobetainyl-CoA reductase"/>
    <property type="match status" value="1"/>
</dbReference>
<dbReference type="Gene3D" id="1.10.540.10">
    <property type="entry name" value="Acyl-CoA dehydrogenase/oxidase, N-terminal domain"/>
    <property type="match status" value="1"/>
</dbReference>
<dbReference type="Gene3D" id="2.40.110.10">
    <property type="entry name" value="Butyryl-CoA Dehydrogenase, subunit A, domain 2"/>
    <property type="match status" value="1"/>
</dbReference>
<dbReference type="Gene3D" id="1.20.140.10">
    <property type="entry name" value="Butyryl-CoA Dehydrogenase, subunit A, domain 3"/>
    <property type="match status" value="1"/>
</dbReference>
<dbReference type="HAMAP" id="MF_01052">
    <property type="entry name" value="CaiA"/>
    <property type="match status" value="1"/>
</dbReference>
<dbReference type="InterPro" id="IPR006089">
    <property type="entry name" value="Acyl-CoA_DH_CS"/>
</dbReference>
<dbReference type="InterPro" id="IPR006091">
    <property type="entry name" value="Acyl-CoA_Oxase/DH_mid-dom"/>
</dbReference>
<dbReference type="InterPro" id="IPR046373">
    <property type="entry name" value="Acyl-CoA_Oxase/DH_mid-dom_sf"/>
</dbReference>
<dbReference type="InterPro" id="IPR036250">
    <property type="entry name" value="AcylCo_DH-like_C"/>
</dbReference>
<dbReference type="InterPro" id="IPR009075">
    <property type="entry name" value="AcylCo_DH/oxidase_C"/>
</dbReference>
<dbReference type="InterPro" id="IPR013786">
    <property type="entry name" value="AcylCoA_DH/ox_N"/>
</dbReference>
<dbReference type="InterPro" id="IPR037069">
    <property type="entry name" value="AcylCoA_DH/ox_N_sf"/>
</dbReference>
<dbReference type="InterPro" id="IPR009100">
    <property type="entry name" value="AcylCoA_DH/oxidase_NM_dom_sf"/>
</dbReference>
<dbReference type="InterPro" id="IPR023450">
    <property type="entry name" value="CaiA"/>
</dbReference>
<dbReference type="NCBIfam" id="NF002885">
    <property type="entry name" value="PRK03354.1"/>
    <property type="match status" value="1"/>
</dbReference>
<dbReference type="PANTHER" id="PTHR43884">
    <property type="entry name" value="ACYL-COA DEHYDROGENASE"/>
    <property type="match status" value="1"/>
</dbReference>
<dbReference type="PANTHER" id="PTHR43884:SF12">
    <property type="entry name" value="ISOVALERYL-COA DEHYDROGENASE, MITOCHONDRIAL-RELATED"/>
    <property type="match status" value="1"/>
</dbReference>
<dbReference type="Pfam" id="PF00441">
    <property type="entry name" value="Acyl-CoA_dh_1"/>
    <property type="match status" value="1"/>
</dbReference>
<dbReference type="Pfam" id="PF02770">
    <property type="entry name" value="Acyl-CoA_dh_M"/>
    <property type="match status" value="1"/>
</dbReference>
<dbReference type="Pfam" id="PF02771">
    <property type="entry name" value="Acyl-CoA_dh_N"/>
    <property type="match status" value="1"/>
</dbReference>
<dbReference type="PIRSF" id="PIRSF016578">
    <property type="entry name" value="HsaA"/>
    <property type="match status" value="1"/>
</dbReference>
<dbReference type="SUPFAM" id="SSF47203">
    <property type="entry name" value="Acyl-CoA dehydrogenase C-terminal domain-like"/>
    <property type="match status" value="1"/>
</dbReference>
<dbReference type="SUPFAM" id="SSF56645">
    <property type="entry name" value="Acyl-CoA dehydrogenase NM domain-like"/>
    <property type="match status" value="1"/>
</dbReference>
<dbReference type="PROSITE" id="PS00072">
    <property type="entry name" value="ACYL_COA_DH_1"/>
    <property type="match status" value="1"/>
</dbReference>
<dbReference type="PROSITE" id="PS00073">
    <property type="entry name" value="ACYL_COA_DH_2"/>
    <property type="match status" value="1"/>
</dbReference>
<proteinExistence type="inferred from homology"/>
<sequence>MDFNLNDEQELFVAGIRELMASENWEAYFAECDRDSVYPERFVKALADMGIDSLLIPEEHGGLDAGFVTLAAVWMELGRLGAPTYVLYQLPGGFNTFLREGTQEQIDKIMAFRGTGKQMWNSAITEPGAGSDVGSLKTTYTRRNGKIYLNGSKCFITSSAYTPYIVVMARDGASPDKPVYTEWFVDMSKPGIKVTKLEKLGLRMDSCCEITFDDVELDEKDMFGREGNGFNSVKEEFDHERFLVALTNYGTAMCAFEDAARYANQRVQFGEAIGRFQLIQEKFAHMAIKLNSMKNMLYEAAWKADNGTITSGDAAMCKYFCANAAFEVVDSAMQVLGGVGIAGNHRISRFWRDLRVDRVSGGSDEMQILTLGRAVLKQYR</sequence>
<name>CAIA_SHIF8</name>
<accession>Q0T8F5</accession>
<organism>
    <name type="scientific">Shigella flexneri serotype 5b (strain 8401)</name>
    <dbReference type="NCBI Taxonomy" id="373384"/>
    <lineage>
        <taxon>Bacteria</taxon>
        <taxon>Pseudomonadati</taxon>
        <taxon>Pseudomonadota</taxon>
        <taxon>Gammaproteobacteria</taxon>
        <taxon>Enterobacterales</taxon>
        <taxon>Enterobacteriaceae</taxon>
        <taxon>Shigella</taxon>
    </lineage>
</organism>
<reference key="1">
    <citation type="journal article" date="2006" name="BMC Genomics">
        <title>Complete genome sequence of Shigella flexneri 5b and comparison with Shigella flexneri 2a.</title>
        <authorList>
            <person name="Nie H."/>
            <person name="Yang F."/>
            <person name="Zhang X."/>
            <person name="Yang J."/>
            <person name="Chen L."/>
            <person name="Wang J."/>
            <person name="Xiong Z."/>
            <person name="Peng J."/>
            <person name="Sun L."/>
            <person name="Dong J."/>
            <person name="Xue Y."/>
            <person name="Xu X."/>
            <person name="Chen S."/>
            <person name="Yao Z."/>
            <person name="Shen Y."/>
            <person name="Jin Q."/>
        </authorList>
    </citation>
    <scope>NUCLEOTIDE SEQUENCE [LARGE SCALE GENOMIC DNA]</scope>
    <source>
        <strain>8401</strain>
    </source>
</reference>
<protein>
    <recommendedName>
        <fullName evidence="1">Crotonobetainyl-CoA reductase</fullName>
        <ecNumber evidence="1">1.3.8.13</ecNumber>
    </recommendedName>
    <alternativeName>
        <fullName evidence="1">Crotonobetainyl-CoA dehydrogenase</fullName>
    </alternativeName>
</protein>
<comment type="function">
    <text evidence="1">Catalyzes the reduction of crotonobetainyl-CoA to gamma-butyrobetainyl-CoA.</text>
</comment>
<comment type="catalytic activity">
    <reaction evidence="1">
        <text>4-(trimethylamino)butanoyl-CoA + oxidized [electron-transfer flavoprotein] + H(+) = crotonobetainyl-CoA + reduced [electron-transfer flavoprotein]</text>
        <dbReference type="Rhea" id="RHEA:51584"/>
        <dbReference type="Rhea" id="RHEA-COMP:10685"/>
        <dbReference type="Rhea" id="RHEA-COMP:10686"/>
        <dbReference type="ChEBI" id="CHEBI:15378"/>
        <dbReference type="ChEBI" id="CHEBI:57692"/>
        <dbReference type="ChEBI" id="CHEBI:58307"/>
        <dbReference type="ChEBI" id="CHEBI:60933"/>
        <dbReference type="ChEBI" id="CHEBI:61513"/>
        <dbReference type="EC" id="1.3.8.13"/>
    </reaction>
</comment>
<comment type="cofactor">
    <cofactor evidence="1">
        <name>FAD</name>
        <dbReference type="ChEBI" id="CHEBI:57692"/>
    </cofactor>
</comment>
<comment type="pathway">
    <text evidence="1">Amine and polyamine metabolism; carnitine metabolism.</text>
</comment>
<comment type="subunit">
    <text evidence="1">Homotetramer.</text>
</comment>
<comment type="subcellular location">
    <subcellularLocation>
        <location evidence="1">Cytoplasm</location>
    </subcellularLocation>
</comment>
<comment type="similarity">
    <text evidence="1">Belongs to the acyl-CoA dehydrogenase family.</text>
</comment>